<evidence type="ECO:0000250" key="1"/>
<evidence type="ECO:0000255" key="2">
    <source>
        <dbReference type="PROSITE-ProRule" id="PRU00307"/>
    </source>
</evidence>
<evidence type="ECO:0000305" key="3"/>
<dbReference type="EMBL" id="AE005174">
    <property type="protein sequence ID" value="AAG58227.1"/>
    <property type="status" value="ALT_INIT"/>
    <property type="molecule type" value="Genomic_DNA"/>
</dbReference>
<dbReference type="EMBL" id="BA000007">
    <property type="protein sequence ID" value="BAB37399.2"/>
    <property type="molecule type" value="Genomic_DNA"/>
</dbReference>
<dbReference type="RefSeq" id="NP_312003.2">
    <property type="nucleotide sequence ID" value="NC_002695.1"/>
</dbReference>
<dbReference type="RefSeq" id="WP_000406488.1">
    <property type="nucleotide sequence ID" value="NZ_VOAI01000009.1"/>
</dbReference>
<dbReference type="SMR" id="P0ACL3"/>
<dbReference type="STRING" id="155864.Z4448"/>
<dbReference type="GeneID" id="916189"/>
<dbReference type="GeneID" id="93778889"/>
<dbReference type="KEGG" id="ece:Z4448"/>
<dbReference type="KEGG" id="ecs:ECs_3976"/>
<dbReference type="PATRIC" id="fig|386585.9.peg.4150"/>
<dbReference type="eggNOG" id="COG2186">
    <property type="taxonomic scope" value="Bacteria"/>
</dbReference>
<dbReference type="HOGENOM" id="CLU_017584_9_5_6"/>
<dbReference type="OMA" id="EDPTFGD"/>
<dbReference type="Proteomes" id="UP000000558">
    <property type="component" value="Chromosome"/>
</dbReference>
<dbReference type="Proteomes" id="UP000002519">
    <property type="component" value="Chromosome"/>
</dbReference>
<dbReference type="GO" id="GO:0003677">
    <property type="term" value="F:DNA binding"/>
    <property type="evidence" value="ECO:0007669"/>
    <property type="project" value="UniProtKB-KW"/>
</dbReference>
<dbReference type="GO" id="GO:0003700">
    <property type="term" value="F:DNA-binding transcription factor activity"/>
    <property type="evidence" value="ECO:0007669"/>
    <property type="project" value="InterPro"/>
</dbReference>
<dbReference type="CDD" id="cd07377">
    <property type="entry name" value="WHTH_GntR"/>
    <property type="match status" value="1"/>
</dbReference>
<dbReference type="FunFam" id="1.10.10.10:FF:000252">
    <property type="entry name" value="Exu regulon transcriptional regulator"/>
    <property type="match status" value="1"/>
</dbReference>
<dbReference type="FunFam" id="1.20.120.530:FF:000002">
    <property type="entry name" value="GntR family transcriptional regulator"/>
    <property type="match status" value="1"/>
</dbReference>
<dbReference type="Gene3D" id="1.20.120.530">
    <property type="entry name" value="GntR ligand-binding domain-like"/>
    <property type="match status" value="1"/>
</dbReference>
<dbReference type="Gene3D" id="1.10.10.10">
    <property type="entry name" value="Winged helix-like DNA-binding domain superfamily/Winged helix DNA-binding domain"/>
    <property type="match status" value="1"/>
</dbReference>
<dbReference type="InterPro" id="IPR011711">
    <property type="entry name" value="GntR_C"/>
</dbReference>
<dbReference type="InterPro" id="IPR008920">
    <property type="entry name" value="TF_FadR/GntR_C"/>
</dbReference>
<dbReference type="InterPro" id="IPR000524">
    <property type="entry name" value="Tscrpt_reg_HTH_GntR"/>
</dbReference>
<dbReference type="InterPro" id="IPR036388">
    <property type="entry name" value="WH-like_DNA-bd_sf"/>
</dbReference>
<dbReference type="InterPro" id="IPR036390">
    <property type="entry name" value="WH_DNA-bd_sf"/>
</dbReference>
<dbReference type="NCBIfam" id="NF008571">
    <property type="entry name" value="PRK11523.1"/>
    <property type="match status" value="1"/>
</dbReference>
<dbReference type="PANTHER" id="PTHR43537:SF7">
    <property type="entry name" value="EXU REGULON TRANSCRIPTIONAL REGULATOR"/>
    <property type="match status" value="1"/>
</dbReference>
<dbReference type="PANTHER" id="PTHR43537">
    <property type="entry name" value="TRANSCRIPTIONAL REGULATOR, GNTR FAMILY"/>
    <property type="match status" value="1"/>
</dbReference>
<dbReference type="Pfam" id="PF07729">
    <property type="entry name" value="FCD"/>
    <property type="match status" value="1"/>
</dbReference>
<dbReference type="Pfam" id="PF00392">
    <property type="entry name" value="GntR"/>
    <property type="match status" value="1"/>
</dbReference>
<dbReference type="PRINTS" id="PR00035">
    <property type="entry name" value="HTHGNTR"/>
</dbReference>
<dbReference type="SMART" id="SM00895">
    <property type="entry name" value="FCD"/>
    <property type="match status" value="1"/>
</dbReference>
<dbReference type="SMART" id="SM00345">
    <property type="entry name" value="HTH_GNTR"/>
    <property type="match status" value="1"/>
</dbReference>
<dbReference type="SUPFAM" id="SSF48008">
    <property type="entry name" value="GntR ligand-binding domain-like"/>
    <property type="match status" value="1"/>
</dbReference>
<dbReference type="SUPFAM" id="SSF46785">
    <property type="entry name" value="Winged helix' DNA-binding domain"/>
    <property type="match status" value="1"/>
</dbReference>
<dbReference type="PROSITE" id="PS50949">
    <property type="entry name" value="HTH_GNTR"/>
    <property type="match status" value="1"/>
</dbReference>
<reference key="1">
    <citation type="journal article" date="2001" name="Nature">
        <title>Genome sequence of enterohaemorrhagic Escherichia coli O157:H7.</title>
        <authorList>
            <person name="Perna N.T."/>
            <person name="Plunkett G. III"/>
            <person name="Burland V."/>
            <person name="Mau B."/>
            <person name="Glasner J.D."/>
            <person name="Rose D.J."/>
            <person name="Mayhew G.F."/>
            <person name="Evans P.S."/>
            <person name="Gregor J."/>
            <person name="Kirkpatrick H.A."/>
            <person name="Posfai G."/>
            <person name="Hackett J."/>
            <person name="Klink S."/>
            <person name="Boutin A."/>
            <person name="Shao Y."/>
            <person name="Miller L."/>
            <person name="Grotbeck E.J."/>
            <person name="Davis N.W."/>
            <person name="Lim A."/>
            <person name="Dimalanta E.T."/>
            <person name="Potamousis K."/>
            <person name="Apodaca J."/>
            <person name="Anantharaman T.S."/>
            <person name="Lin J."/>
            <person name="Yen G."/>
            <person name="Schwartz D.C."/>
            <person name="Welch R.A."/>
            <person name="Blattner F.R."/>
        </authorList>
    </citation>
    <scope>NUCLEOTIDE SEQUENCE [LARGE SCALE GENOMIC DNA]</scope>
    <source>
        <strain>O157:H7 / EDL933 / ATCC 700927 / EHEC</strain>
    </source>
</reference>
<reference key="2">
    <citation type="journal article" date="2001" name="DNA Res.">
        <title>Complete genome sequence of enterohemorrhagic Escherichia coli O157:H7 and genomic comparison with a laboratory strain K-12.</title>
        <authorList>
            <person name="Hayashi T."/>
            <person name="Makino K."/>
            <person name="Ohnishi M."/>
            <person name="Kurokawa K."/>
            <person name="Ishii K."/>
            <person name="Yokoyama K."/>
            <person name="Han C.-G."/>
            <person name="Ohtsubo E."/>
            <person name="Nakayama K."/>
            <person name="Murata T."/>
            <person name="Tanaka M."/>
            <person name="Tobe T."/>
            <person name="Iida T."/>
            <person name="Takami H."/>
            <person name="Honda T."/>
            <person name="Sasakawa C."/>
            <person name="Ogasawara N."/>
            <person name="Yasunaga T."/>
            <person name="Kuhara S."/>
            <person name="Shiba T."/>
            <person name="Hattori M."/>
            <person name="Shinagawa H."/>
        </authorList>
    </citation>
    <scope>NUCLEOTIDE SEQUENCE [LARGE SCALE GENOMIC DNA]</scope>
    <source>
        <strain>O157:H7 / Sakai / RIMD 0509952 / EHEC</strain>
    </source>
</reference>
<sequence>MEITEPRRLYQQLAADLKERIEQGVYLVGDKLPAERFIADEKNVSRTVVREAIIMLEVEGYVEVRKGSGIHVVSNQPRHQQAADNNMEFANYGPFELLQARQLIESNIAEFAATQVTKQDIMKLMAIQEQARGEQCFRDSEWDLQFHIQVALATQNSALAAIVEKMWTQRSHNPYWKKLHEHIDSRTVDNWCDDHDQILKALIRKDPHAAKLAMWQHLENTKIMLFNETSDDFEFNADRYLFAENPVVHLDTATSGSK</sequence>
<proteinExistence type="inferred from homology"/>
<organism>
    <name type="scientific">Escherichia coli O157:H7</name>
    <dbReference type="NCBI Taxonomy" id="83334"/>
    <lineage>
        <taxon>Bacteria</taxon>
        <taxon>Pseudomonadati</taxon>
        <taxon>Pseudomonadota</taxon>
        <taxon>Gammaproteobacteria</taxon>
        <taxon>Enterobacterales</taxon>
        <taxon>Enterobacteriaceae</taxon>
        <taxon>Escherichia</taxon>
    </lineage>
</organism>
<name>EXUR_ECO57</name>
<keyword id="KW-0238">DNA-binding</keyword>
<keyword id="KW-1185">Reference proteome</keyword>
<keyword id="KW-0678">Repressor</keyword>
<keyword id="KW-0804">Transcription</keyword>
<keyword id="KW-0805">Transcription regulation</keyword>
<gene>
    <name type="primary">exuR</name>
    <name type="ordered locus">Z4448</name>
    <name type="ordered locus">ECs3976</name>
</gene>
<accession>P0ACL3</accession>
<accession>P42608</accession>
<accession>P76665</accession>
<accession>Q8X4Y9</accession>
<comment type="function">
    <text evidence="1">Repressor for the exu regulon that encode genes involved in hexuronate utilization. It regulates the ExuT, UxaCA and UxuRAB operons. Binds D-tagaturonate and D-fructuronate as inducers (By similarity).</text>
</comment>
<comment type="sequence caution" evidence="3">
    <conflict type="erroneous initiation">
        <sequence resource="EMBL-CDS" id="AAG58227"/>
    </conflict>
    <text>Extended N-terminus.</text>
</comment>
<feature type="chain" id="PRO_0000050623" description="Exu regulon transcriptional regulator">
    <location>
        <begin position="1"/>
        <end position="258"/>
    </location>
</feature>
<feature type="domain" description="HTH gntR-type" evidence="2">
    <location>
        <begin position="7"/>
        <end position="75"/>
    </location>
</feature>
<feature type="DNA-binding region" description="H-T-H motif" evidence="2">
    <location>
        <begin position="35"/>
        <end position="54"/>
    </location>
</feature>
<protein>
    <recommendedName>
        <fullName>Exu regulon transcriptional regulator</fullName>
    </recommendedName>
</protein>